<organism>
    <name type="scientific">Prochlorococcus marinus (strain MIT 9312)</name>
    <dbReference type="NCBI Taxonomy" id="74546"/>
    <lineage>
        <taxon>Bacteria</taxon>
        <taxon>Bacillati</taxon>
        <taxon>Cyanobacteriota</taxon>
        <taxon>Cyanophyceae</taxon>
        <taxon>Synechococcales</taxon>
        <taxon>Prochlorococcaceae</taxon>
        <taxon>Prochlorococcus</taxon>
    </lineage>
</organism>
<dbReference type="EC" id="3.1.26.11" evidence="1"/>
<dbReference type="EMBL" id="CP000111">
    <property type="protein sequence ID" value="ABB50507.1"/>
    <property type="molecule type" value="Genomic_DNA"/>
</dbReference>
<dbReference type="RefSeq" id="WP_011376991.1">
    <property type="nucleotide sequence ID" value="NC_007577.1"/>
</dbReference>
<dbReference type="SMR" id="Q319D8"/>
<dbReference type="STRING" id="74546.PMT9312_1447"/>
<dbReference type="KEGG" id="pmi:PMT9312_1447"/>
<dbReference type="eggNOG" id="COG1234">
    <property type="taxonomic scope" value="Bacteria"/>
</dbReference>
<dbReference type="HOGENOM" id="CLU_031317_2_0_3"/>
<dbReference type="OrthoDB" id="9800940at2"/>
<dbReference type="Proteomes" id="UP000002715">
    <property type="component" value="Chromosome"/>
</dbReference>
<dbReference type="GO" id="GO:0042781">
    <property type="term" value="F:3'-tRNA processing endoribonuclease activity"/>
    <property type="evidence" value="ECO:0007669"/>
    <property type="project" value="UniProtKB-UniRule"/>
</dbReference>
<dbReference type="GO" id="GO:0008270">
    <property type="term" value="F:zinc ion binding"/>
    <property type="evidence" value="ECO:0007669"/>
    <property type="project" value="UniProtKB-UniRule"/>
</dbReference>
<dbReference type="CDD" id="cd07717">
    <property type="entry name" value="RNaseZ_ZiPD-like_MBL-fold"/>
    <property type="match status" value="1"/>
</dbReference>
<dbReference type="FunFam" id="3.60.15.10:FF:000002">
    <property type="entry name" value="Ribonuclease Z"/>
    <property type="match status" value="1"/>
</dbReference>
<dbReference type="Gene3D" id="3.60.15.10">
    <property type="entry name" value="Ribonuclease Z/Hydroxyacylglutathione hydrolase-like"/>
    <property type="match status" value="1"/>
</dbReference>
<dbReference type="HAMAP" id="MF_01818">
    <property type="entry name" value="RNase_Z_BN"/>
    <property type="match status" value="1"/>
</dbReference>
<dbReference type="InterPro" id="IPR001279">
    <property type="entry name" value="Metallo-B-lactamas"/>
</dbReference>
<dbReference type="InterPro" id="IPR036866">
    <property type="entry name" value="RibonucZ/Hydroxyglut_hydro"/>
</dbReference>
<dbReference type="InterPro" id="IPR013471">
    <property type="entry name" value="RNase_Z/BN"/>
</dbReference>
<dbReference type="NCBIfam" id="NF000801">
    <property type="entry name" value="PRK00055.1-3"/>
    <property type="match status" value="1"/>
</dbReference>
<dbReference type="NCBIfam" id="TIGR02651">
    <property type="entry name" value="RNase_Z"/>
    <property type="match status" value="1"/>
</dbReference>
<dbReference type="PANTHER" id="PTHR46018">
    <property type="entry name" value="ZINC PHOSPHODIESTERASE ELAC PROTEIN 1"/>
    <property type="match status" value="1"/>
</dbReference>
<dbReference type="PANTHER" id="PTHR46018:SF2">
    <property type="entry name" value="ZINC PHOSPHODIESTERASE ELAC PROTEIN 1"/>
    <property type="match status" value="1"/>
</dbReference>
<dbReference type="Pfam" id="PF12706">
    <property type="entry name" value="Lactamase_B_2"/>
    <property type="match status" value="1"/>
</dbReference>
<dbReference type="SUPFAM" id="SSF56281">
    <property type="entry name" value="Metallo-hydrolase/oxidoreductase"/>
    <property type="match status" value="1"/>
</dbReference>
<sequence>MNITFLGTSSGVPSLTRNVSSLALKLSQSSEVWLFDCGEGTQHQIMKSNIKSSQIKKIFITHMHGDHIYGLPGLLATLGLSGNSNGIEIYGPLGLRSFISSALSSSFCKLSFPLHFVEVENFASENKILFENNKLKVNCACLKHKIPAYGYRVSEKDKPGIFDIKKAESMKIAPGPIYSKLQQGKEVLLPDGRTVNGKEFCGPPRKGESFVYCTDTVFSESAVSLSKNADLLVHESTFSQEDESMAYEKLHSTTIMAAKTALLSNTKKLIITHLSPRYTSKNSITPSDLLKEAQKVFPNTHLAKDFLVADIK</sequence>
<accession>Q319D8</accession>
<evidence type="ECO:0000255" key="1">
    <source>
        <dbReference type="HAMAP-Rule" id="MF_01818"/>
    </source>
</evidence>
<feature type="chain" id="PRO_1000070318" description="Ribonuclease Z">
    <location>
        <begin position="1"/>
        <end position="312"/>
    </location>
</feature>
<feature type="active site" description="Proton acceptor" evidence="1">
    <location>
        <position position="66"/>
    </location>
</feature>
<feature type="binding site" evidence="1">
    <location>
        <position position="62"/>
    </location>
    <ligand>
        <name>Zn(2+)</name>
        <dbReference type="ChEBI" id="CHEBI:29105"/>
        <label>1</label>
        <note>catalytic</note>
    </ligand>
</feature>
<feature type="binding site" evidence="1">
    <location>
        <position position="64"/>
    </location>
    <ligand>
        <name>Zn(2+)</name>
        <dbReference type="ChEBI" id="CHEBI:29105"/>
        <label>1</label>
        <note>catalytic</note>
    </ligand>
</feature>
<feature type="binding site" evidence="1">
    <location>
        <position position="66"/>
    </location>
    <ligand>
        <name>Zn(2+)</name>
        <dbReference type="ChEBI" id="CHEBI:29105"/>
        <label>2</label>
        <note>catalytic</note>
    </ligand>
</feature>
<feature type="binding site" evidence="1">
    <location>
        <position position="67"/>
    </location>
    <ligand>
        <name>Zn(2+)</name>
        <dbReference type="ChEBI" id="CHEBI:29105"/>
        <label>2</label>
        <note>catalytic</note>
    </ligand>
</feature>
<feature type="binding site" evidence="1">
    <location>
        <position position="144"/>
    </location>
    <ligand>
        <name>Zn(2+)</name>
        <dbReference type="ChEBI" id="CHEBI:29105"/>
        <label>1</label>
        <note>catalytic</note>
    </ligand>
</feature>
<feature type="binding site" evidence="1">
    <location>
        <position position="215"/>
    </location>
    <ligand>
        <name>Zn(2+)</name>
        <dbReference type="ChEBI" id="CHEBI:29105"/>
        <label>1</label>
        <note>catalytic</note>
    </ligand>
</feature>
<feature type="binding site" evidence="1">
    <location>
        <position position="215"/>
    </location>
    <ligand>
        <name>Zn(2+)</name>
        <dbReference type="ChEBI" id="CHEBI:29105"/>
        <label>2</label>
        <note>catalytic</note>
    </ligand>
</feature>
<feature type="binding site" evidence="1">
    <location>
        <position position="273"/>
    </location>
    <ligand>
        <name>Zn(2+)</name>
        <dbReference type="ChEBI" id="CHEBI:29105"/>
        <label>2</label>
        <note>catalytic</note>
    </ligand>
</feature>
<keyword id="KW-0255">Endonuclease</keyword>
<keyword id="KW-0378">Hydrolase</keyword>
<keyword id="KW-0479">Metal-binding</keyword>
<keyword id="KW-0540">Nuclease</keyword>
<keyword id="KW-0819">tRNA processing</keyword>
<keyword id="KW-0862">Zinc</keyword>
<proteinExistence type="inferred from homology"/>
<protein>
    <recommendedName>
        <fullName evidence="1">Ribonuclease Z</fullName>
        <shortName evidence="1">RNase Z</shortName>
        <ecNumber evidence="1">3.1.26.11</ecNumber>
    </recommendedName>
    <alternativeName>
        <fullName evidence="1">tRNA 3 endonuclease</fullName>
    </alternativeName>
    <alternativeName>
        <fullName evidence="1">tRNase Z</fullName>
    </alternativeName>
</protein>
<name>RNZ_PROM9</name>
<reference key="1">
    <citation type="journal article" date="2006" name="Science">
        <title>Genomic islands and the ecology and evolution of Prochlorococcus.</title>
        <authorList>
            <person name="Coleman M.L."/>
            <person name="Sullivan M.B."/>
            <person name="Martiny A.C."/>
            <person name="Steglich C."/>
            <person name="Barry K."/>
            <person name="Delong E.F."/>
            <person name="Chisholm S.W."/>
        </authorList>
    </citation>
    <scope>NUCLEOTIDE SEQUENCE [LARGE SCALE GENOMIC DNA]</scope>
    <source>
        <strain>MIT 9312</strain>
    </source>
</reference>
<gene>
    <name evidence="1" type="primary">rnz</name>
    <name type="ordered locus">PMT9312_1447</name>
</gene>
<comment type="function">
    <text evidence="1">Zinc phosphodiesterase, which displays some tRNA 3'-processing endonuclease activity. Probably involved in tRNA maturation, by removing a 3'-trailer from precursor tRNA.</text>
</comment>
<comment type="catalytic activity">
    <reaction evidence="1">
        <text>Endonucleolytic cleavage of RNA, removing extra 3' nucleotides from tRNA precursor, generating 3' termini of tRNAs. A 3'-hydroxy group is left at the tRNA terminus and a 5'-phosphoryl group is left at the trailer molecule.</text>
        <dbReference type="EC" id="3.1.26.11"/>
    </reaction>
</comment>
<comment type="cofactor">
    <cofactor evidence="1">
        <name>Zn(2+)</name>
        <dbReference type="ChEBI" id="CHEBI:29105"/>
    </cofactor>
    <text evidence="1">Binds 2 Zn(2+) ions.</text>
</comment>
<comment type="subunit">
    <text evidence="1">Homodimer.</text>
</comment>
<comment type="similarity">
    <text evidence="1">Belongs to the RNase Z family.</text>
</comment>